<name>DLTA_BACC4</name>
<reference key="1">
    <citation type="submission" date="2008-10" db="EMBL/GenBank/DDBJ databases">
        <title>Genome sequence of Bacillus cereus B4264.</title>
        <authorList>
            <person name="Dodson R.J."/>
            <person name="Durkin A.S."/>
            <person name="Rosovitz M.J."/>
            <person name="Rasko D.A."/>
            <person name="Hoffmaster A."/>
            <person name="Ravel J."/>
            <person name="Sutton G."/>
        </authorList>
    </citation>
    <scope>NUCLEOTIDE SEQUENCE [LARGE SCALE GENOMIC DNA]</scope>
    <source>
        <strain>B4264</strain>
    </source>
</reference>
<organism>
    <name type="scientific">Bacillus cereus (strain B4264)</name>
    <dbReference type="NCBI Taxonomy" id="405532"/>
    <lineage>
        <taxon>Bacteria</taxon>
        <taxon>Bacillati</taxon>
        <taxon>Bacillota</taxon>
        <taxon>Bacilli</taxon>
        <taxon>Bacillales</taxon>
        <taxon>Bacillaceae</taxon>
        <taxon>Bacillus</taxon>
        <taxon>Bacillus cereus group</taxon>
    </lineage>
</organism>
<dbReference type="EC" id="6.2.1.54" evidence="1"/>
<dbReference type="EMBL" id="CP001176">
    <property type="protein sequence ID" value="ACK62403.1"/>
    <property type="molecule type" value="Genomic_DNA"/>
</dbReference>
<dbReference type="RefSeq" id="WP_000770505.1">
    <property type="nucleotide sequence ID" value="NZ_VEHB01000003.1"/>
</dbReference>
<dbReference type="SMR" id="B7HHC6"/>
<dbReference type="KEGG" id="bcb:BCB4264_A1424"/>
<dbReference type="HOGENOM" id="CLU_000022_2_12_9"/>
<dbReference type="UniPathway" id="UPA00556"/>
<dbReference type="Proteomes" id="UP000007096">
    <property type="component" value="Chromosome"/>
</dbReference>
<dbReference type="GO" id="GO:0005737">
    <property type="term" value="C:cytoplasm"/>
    <property type="evidence" value="ECO:0007669"/>
    <property type="project" value="UniProtKB-SubCell"/>
</dbReference>
<dbReference type="GO" id="GO:0005524">
    <property type="term" value="F:ATP binding"/>
    <property type="evidence" value="ECO:0007669"/>
    <property type="project" value="UniProtKB-KW"/>
</dbReference>
<dbReference type="GO" id="GO:0047473">
    <property type="term" value="F:D-alanine [D-alanyl carrier protein] ligase activity"/>
    <property type="evidence" value="ECO:0007669"/>
    <property type="project" value="UniProtKB-UniRule"/>
</dbReference>
<dbReference type="GO" id="GO:0070395">
    <property type="term" value="P:lipoteichoic acid biosynthetic process"/>
    <property type="evidence" value="ECO:0007669"/>
    <property type="project" value="UniProtKB-UniRule"/>
</dbReference>
<dbReference type="CDD" id="cd05945">
    <property type="entry name" value="DltA"/>
    <property type="match status" value="1"/>
</dbReference>
<dbReference type="FunFam" id="3.30.300.30:FF:000012">
    <property type="entry name" value="D-alanine--D-alanyl carrier protein ligase"/>
    <property type="match status" value="1"/>
</dbReference>
<dbReference type="FunFam" id="3.40.50.12780:FF:000015">
    <property type="entry name" value="D-alanine--D-alanyl carrier protein ligase"/>
    <property type="match status" value="1"/>
</dbReference>
<dbReference type="Gene3D" id="3.30.300.30">
    <property type="match status" value="1"/>
</dbReference>
<dbReference type="Gene3D" id="3.40.50.12780">
    <property type="entry name" value="N-terminal domain of ligase-like"/>
    <property type="match status" value="1"/>
</dbReference>
<dbReference type="HAMAP" id="MF_00593">
    <property type="entry name" value="DltA"/>
    <property type="match status" value="1"/>
</dbReference>
<dbReference type="InterPro" id="IPR010071">
    <property type="entry name" value="AA_adenyl_dom"/>
</dbReference>
<dbReference type="InterPro" id="IPR025110">
    <property type="entry name" value="AMP-bd_C"/>
</dbReference>
<dbReference type="InterPro" id="IPR045851">
    <property type="entry name" value="AMP-bd_C_sf"/>
</dbReference>
<dbReference type="InterPro" id="IPR020845">
    <property type="entry name" value="AMP-binding_CS"/>
</dbReference>
<dbReference type="InterPro" id="IPR000873">
    <property type="entry name" value="AMP-dep_synth/lig_dom"/>
</dbReference>
<dbReference type="InterPro" id="IPR042099">
    <property type="entry name" value="ANL_N_sf"/>
</dbReference>
<dbReference type="InterPro" id="IPR010072">
    <property type="entry name" value="DltA"/>
</dbReference>
<dbReference type="InterPro" id="IPR044507">
    <property type="entry name" value="DltA-like"/>
</dbReference>
<dbReference type="NCBIfam" id="TIGR01733">
    <property type="entry name" value="AA-adenyl-dom"/>
    <property type="match status" value="1"/>
</dbReference>
<dbReference type="NCBIfam" id="TIGR01734">
    <property type="entry name" value="D-ala-DACP-lig"/>
    <property type="match status" value="1"/>
</dbReference>
<dbReference type="NCBIfam" id="NF003417">
    <property type="entry name" value="PRK04813.1"/>
    <property type="match status" value="1"/>
</dbReference>
<dbReference type="PANTHER" id="PTHR45398">
    <property type="match status" value="1"/>
</dbReference>
<dbReference type="PANTHER" id="PTHR45398:SF1">
    <property type="entry name" value="ENZYME, PUTATIVE (JCVI)-RELATED"/>
    <property type="match status" value="1"/>
</dbReference>
<dbReference type="Pfam" id="PF00501">
    <property type="entry name" value="AMP-binding"/>
    <property type="match status" value="1"/>
</dbReference>
<dbReference type="Pfam" id="PF13193">
    <property type="entry name" value="AMP-binding_C"/>
    <property type="match status" value="1"/>
</dbReference>
<dbReference type="SUPFAM" id="SSF56801">
    <property type="entry name" value="Acetyl-CoA synthetase-like"/>
    <property type="match status" value="1"/>
</dbReference>
<dbReference type="PROSITE" id="PS00455">
    <property type="entry name" value="AMP_BINDING"/>
    <property type="match status" value="1"/>
</dbReference>
<accession>B7HHC6</accession>
<sequence>MKLLEQIEKWAAETPDQTAFVWRDAKITYKQLKEDSDALAHWISSEYPDDRSPIMVYGHMQPEMIINFLGCVKAGHAYIPVDLSIPADRVQRIAENSGAKLLLSATAVTVTDLPVRIVSEDNLKDIFFTHKGNTPNPEHAVKGDENFYIIYTSGSTGNPKGVQITYNCLVSFTKWAVEDFNLQTGQVFLNQAPFSFDLSVMDIYPSLVTGGTLWAIDKDMIARPKDLFASLEQSDIQVWTSTPSFAEMCLMEASFSESMLPNMKTFLFCGEVLPNEVARKLIERFPKATIMNTYGPTEATVAVTGIHVTEEVLDQYKSLPVGYCKSDCRLLIMKEDGTIAPDGEKGEIVIVGPSVSVGYLGSPELTEKAFTMIDGERAYKTGDAGYVENGLLFYNGRLDFQIKLHGYRMELEEIEHHLRACSYVEGAVIVPIKKGEKYDYLLAVVVPGEHSFEKEFKLTSAIKKELNERLPNYMIPRKFMYQSSIPMTPNGKVDRKKLLSEVTA</sequence>
<gene>
    <name evidence="1" type="primary">dltA</name>
    <name type="ordered locus">BCB4264_A1424</name>
</gene>
<keyword id="KW-0067">ATP-binding</keyword>
<keyword id="KW-0963">Cytoplasm</keyword>
<keyword id="KW-0436">Ligase</keyword>
<keyword id="KW-0547">Nucleotide-binding</keyword>
<feature type="chain" id="PRO_1000129819" description="D-alanine--D-alanyl carrier protein ligase">
    <location>
        <begin position="1"/>
        <end position="504"/>
    </location>
</feature>
<feature type="binding site" evidence="1">
    <location>
        <begin position="152"/>
        <end position="153"/>
    </location>
    <ligand>
        <name>ATP</name>
        <dbReference type="ChEBI" id="CHEBI:30616"/>
    </ligand>
</feature>
<feature type="binding site" evidence="1">
    <location>
        <position position="197"/>
    </location>
    <ligand>
        <name>D-alanine</name>
        <dbReference type="ChEBI" id="CHEBI:57416"/>
    </ligand>
</feature>
<feature type="binding site" evidence="1">
    <location>
        <begin position="292"/>
        <end position="297"/>
    </location>
    <ligand>
        <name>ATP</name>
        <dbReference type="ChEBI" id="CHEBI:30616"/>
    </ligand>
</feature>
<feature type="binding site" evidence="1">
    <location>
        <position position="301"/>
    </location>
    <ligand>
        <name>D-alanine</name>
        <dbReference type="ChEBI" id="CHEBI:57416"/>
    </ligand>
</feature>
<feature type="binding site" evidence="1">
    <location>
        <position position="383"/>
    </location>
    <ligand>
        <name>ATP</name>
        <dbReference type="ChEBI" id="CHEBI:30616"/>
    </ligand>
</feature>
<feature type="binding site" evidence="1">
    <location>
        <begin position="394"/>
        <end position="397"/>
    </location>
    <ligand>
        <name>ATP</name>
        <dbReference type="ChEBI" id="CHEBI:30616"/>
    </ligand>
</feature>
<feature type="binding site" evidence="1">
    <location>
        <position position="492"/>
    </location>
    <ligand>
        <name>ATP</name>
        <dbReference type="ChEBI" id="CHEBI:30616"/>
    </ligand>
</feature>
<feature type="binding site" evidence="1">
    <location>
        <position position="492"/>
    </location>
    <ligand>
        <name>D-alanine</name>
        <dbReference type="ChEBI" id="CHEBI:57416"/>
    </ligand>
</feature>
<proteinExistence type="inferred from homology"/>
<comment type="function">
    <text evidence="1">Catalyzes the first step in the D-alanylation of lipoteichoic acid (LTA), the activation of D-alanine and its transfer onto the D-alanyl carrier protein (Dcp) DltC. In an ATP-dependent two-step reaction, forms a high energy D-alanyl-AMP intermediate, followed by transfer of the D-alanyl residue as a thiol ester to the phosphopantheinyl prosthetic group of the Dcp. D-alanylation of LTA plays an important role in modulating the properties of the cell wall in Gram-positive bacteria, influencing the net charge of the cell wall.</text>
</comment>
<comment type="catalytic activity">
    <reaction evidence="1">
        <text>holo-[D-alanyl-carrier protein] + D-alanine + ATP = D-alanyl-[D-alanyl-carrier protein] + AMP + diphosphate</text>
        <dbReference type="Rhea" id="RHEA:55132"/>
        <dbReference type="Rhea" id="RHEA-COMP:14102"/>
        <dbReference type="Rhea" id="RHEA-COMP:14103"/>
        <dbReference type="ChEBI" id="CHEBI:30616"/>
        <dbReference type="ChEBI" id="CHEBI:33019"/>
        <dbReference type="ChEBI" id="CHEBI:57416"/>
        <dbReference type="ChEBI" id="CHEBI:64479"/>
        <dbReference type="ChEBI" id="CHEBI:138620"/>
        <dbReference type="ChEBI" id="CHEBI:456215"/>
        <dbReference type="EC" id="6.2.1.54"/>
    </reaction>
</comment>
<comment type="pathway">
    <text evidence="1">Cell wall biogenesis; lipoteichoic acid biosynthesis.</text>
</comment>
<comment type="subcellular location">
    <subcellularLocation>
        <location evidence="1">Cytoplasm</location>
    </subcellularLocation>
</comment>
<comment type="similarity">
    <text evidence="1">Belongs to the ATP-dependent AMP-binding enzyme family. DltA subfamily.</text>
</comment>
<evidence type="ECO:0000255" key="1">
    <source>
        <dbReference type="HAMAP-Rule" id="MF_00593"/>
    </source>
</evidence>
<protein>
    <recommendedName>
        <fullName evidence="1">D-alanine--D-alanyl carrier protein ligase</fullName>
        <shortName evidence="1">DCL</shortName>
        <ecNumber evidence="1">6.2.1.54</ecNumber>
    </recommendedName>
    <alternativeName>
        <fullName evidence="1">D-alanine--poly(phosphoribitol) ligase subunit 1</fullName>
    </alternativeName>
    <alternativeName>
        <fullName evidence="1">D-alanine-activating enzyme</fullName>
        <shortName evidence="1">DAE</shortName>
    </alternativeName>
</protein>